<name>YSL17_ORYSJ</name>
<dbReference type="EMBL" id="AP003936">
    <property type="protein sequence ID" value="BAC99405.1"/>
    <property type="molecule type" value="Genomic_DNA"/>
</dbReference>
<dbReference type="EMBL" id="AP004556">
    <property type="protein sequence ID" value="BAC99534.1"/>
    <property type="molecule type" value="Genomic_DNA"/>
</dbReference>
<dbReference type="EMBL" id="AP008214">
    <property type="protein sequence ID" value="BAF23356.2"/>
    <property type="status" value="ALT_SEQ"/>
    <property type="molecule type" value="Genomic_DNA"/>
</dbReference>
<dbReference type="EMBL" id="AP014964">
    <property type="status" value="NOT_ANNOTATED_CDS"/>
    <property type="molecule type" value="Genomic_DNA"/>
</dbReference>
<dbReference type="EMBL" id="AB190925">
    <property type="protein sequence ID" value="BAE91895.1"/>
    <property type="molecule type" value="mRNA"/>
</dbReference>
<dbReference type="RefSeq" id="XP_015649646.1">
    <property type="nucleotide sequence ID" value="XM_015794160.1"/>
</dbReference>
<dbReference type="SMR" id="Q6ZCX1"/>
<dbReference type="FunCoup" id="Q6ZCX1">
    <property type="interactions" value="42"/>
</dbReference>
<dbReference type="STRING" id="39947.Q6ZCX1"/>
<dbReference type="PaxDb" id="39947-Q6ZCX1"/>
<dbReference type="KEGG" id="dosa:Os08g0280300"/>
<dbReference type="eggNOG" id="ENOG502QQ2H">
    <property type="taxonomic scope" value="Eukaryota"/>
</dbReference>
<dbReference type="HOGENOM" id="CLU_015477_2_0_1"/>
<dbReference type="InParanoid" id="Q6ZCX1"/>
<dbReference type="OrthoDB" id="627262at2759"/>
<dbReference type="Proteomes" id="UP000000763">
    <property type="component" value="Chromosome 8"/>
</dbReference>
<dbReference type="Proteomes" id="UP000059680">
    <property type="component" value="Chromosome 8"/>
</dbReference>
<dbReference type="GO" id="GO:0016020">
    <property type="term" value="C:membrane"/>
    <property type="evidence" value="ECO:0000318"/>
    <property type="project" value="GO_Central"/>
</dbReference>
<dbReference type="GO" id="GO:0035673">
    <property type="term" value="F:oligopeptide transmembrane transporter activity"/>
    <property type="evidence" value="ECO:0007669"/>
    <property type="project" value="InterPro"/>
</dbReference>
<dbReference type="InterPro" id="IPR004813">
    <property type="entry name" value="OPT"/>
</dbReference>
<dbReference type="InterPro" id="IPR045035">
    <property type="entry name" value="YSL-like"/>
</dbReference>
<dbReference type="NCBIfam" id="TIGR00728">
    <property type="entry name" value="OPT_sfam"/>
    <property type="match status" value="1"/>
</dbReference>
<dbReference type="PANTHER" id="PTHR31645:SF48">
    <property type="entry name" value="METAL-NICOTIANAMINE TRANSPORTER YSL17-RELATED"/>
    <property type="match status" value="1"/>
</dbReference>
<dbReference type="PANTHER" id="PTHR31645">
    <property type="entry name" value="OLIGOPEPTIDE TRANSPORTER YGL114W-RELATED"/>
    <property type="match status" value="1"/>
</dbReference>
<dbReference type="Pfam" id="PF03169">
    <property type="entry name" value="OPT"/>
    <property type="match status" value="1"/>
</dbReference>
<protein>
    <recommendedName>
        <fullName>Probable metal-nicotianamine transporter YSL17</fullName>
    </recommendedName>
    <alternativeName>
        <fullName>Protein YELLOW STRIPE LIKE 17</fullName>
        <shortName>OsYSL17</shortName>
    </alternativeName>
</protein>
<comment type="function">
    <text evidence="1">May be involved in the transport of nicotianamine-chelated metals.</text>
</comment>
<comment type="subcellular location">
    <subcellularLocation>
        <location evidence="5">Membrane</location>
        <topology evidence="5">Multi-pass membrane protein</topology>
    </subcellularLocation>
</comment>
<comment type="tissue specificity">
    <text evidence="4">Expressed at low levels in roots.</text>
</comment>
<comment type="similarity">
    <text evidence="5">Belongs to the YSL (TC 2.A.67.2) family.</text>
</comment>
<comment type="sequence caution" evidence="5">
    <conflict type="erroneous gene model prediction">
        <sequence resource="EMBL-CDS" id="BAF23356"/>
    </conflict>
</comment>
<evidence type="ECO:0000250" key="1"/>
<evidence type="ECO:0000255" key="2"/>
<evidence type="ECO:0000256" key="3">
    <source>
        <dbReference type="SAM" id="MobiDB-lite"/>
    </source>
</evidence>
<evidence type="ECO:0000269" key="4">
    <source>
    </source>
</evidence>
<evidence type="ECO:0000305" key="5"/>
<feature type="chain" id="PRO_0000363880" description="Probable metal-nicotianamine transporter YSL17">
    <location>
        <begin position="1"/>
        <end position="698"/>
    </location>
</feature>
<feature type="transmembrane region" description="Helical" evidence="2">
    <location>
        <begin position="43"/>
        <end position="63"/>
    </location>
</feature>
<feature type="transmembrane region" description="Helical" evidence="2">
    <location>
        <begin position="67"/>
        <end position="87"/>
    </location>
</feature>
<feature type="transmembrane region" description="Helical" evidence="2">
    <location>
        <begin position="114"/>
        <end position="134"/>
    </location>
</feature>
<feature type="transmembrane region" description="Helical" evidence="2">
    <location>
        <begin position="157"/>
        <end position="177"/>
    </location>
</feature>
<feature type="transmembrane region" description="Helical" evidence="2">
    <location>
        <begin position="216"/>
        <end position="236"/>
    </location>
</feature>
<feature type="transmembrane region" description="Helical" evidence="2">
    <location>
        <begin position="277"/>
        <end position="297"/>
    </location>
</feature>
<feature type="transmembrane region" description="Helical" evidence="2">
    <location>
        <begin position="322"/>
        <end position="342"/>
    </location>
</feature>
<feature type="transmembrane region" description="Helical" evidence="2">
    <location>
        <begin position="395"/>
        <end position="415"/>
    </location>
</feature>
<feature type="transmembrane region" description="Helical" evidence="2">
    <location>
        <begin position="424"/>
        <end position="444"/>
    </location>
</feature>
<feature type="transmembrane region" description="Helical" evidence="2">
    <location>
        <begin position="463"/>
        <end position="483"/>
    </location>
</feature>
<feature type="transmembrane region" description="Helical" evidence="2">
    <location>
        <begin position="511"/>
        <end position="531"/>
    </location>
</feature>
<feature type="transmembrane region" description="Helical" evidence="2">
    <location>
        <begin position="567"/>
        <end position="587"/>
    </location>
</feature>
<feature type="transmembrane region" description="Helical" evidence="2">
    <location>
        <begin position="607"/>
        <end position="627"/>
    </location>
</feature>
<feature type="transmembrane region" description="Helical" evidence="2">
    <location>
        <begin position="644"/>
        <end position="664"/>
    </location>
</feature>
<feature type="region of interest" description="Disordered" evidence="3">
    <location>
        <begin position="1"/>
        <end position="36"/>
    </location>
</feature>
<organism>
    <name type="scientific">Oryza sativa subsp. japonica</name>
    <name type="common">Rice</name>
    <dbReference type="NCBI Taxonomy" id="39947"/>
    <lineage>
        <taxon>Eukaryota</taxon>
        <taxon>Viridiplantae</taxon>
        <taxon>Streptophyta</taxon>
        <taxon>Embryophyta</taxon>
        <taxon>Tracheophyta</taxon>
        <taxon>Spermatophyta</taxon>
        <taxon>Magnoliopsida</taxon>
        <taxon>Liliopsida</taxon>
        <taxon>Poales</taxon>
        <taxon>Poaceae</taxon>
        <taxon>BOP clade</taxon>
        <taxon>Oryzoideae</taxon>
        <taxon>Oryzeae</taxon>
        <taxon>Oryzinae</taxon>
        <taxon>Oryza</taxon>
        <taxon>Oryza sativa</taxon>
    </lineage>
</organism>
<gene>
    <name type="primary">YSL17</name>
    <name type="ordered locus">Os08g0280300</name>
    <name type="ordered locus">LOC_Os08g17830</name>
    <name type="ORF">OJ1003_E05.7</name>
    <name type="ORF">P0026A08.33</name>
</gene>
<proteinExistence type="evidence at transcript level"/>
<keyword id="KW-0472">Membrane</keyword>
<keyword id="KW-1185">Reference proteome</keyword>
<keyword id="KW-0812">Transmembrane</keyword>
<keyword id="KW-1133">Transmembrane helix</keyword>
<keyword id="KW-0813">Transport</keyword>
<accession>Q6ZCX1</accession>
<accession>Q25CH1</accession>
<sequence>MAEEARGGQRVVVDDDREDASSVASSTERAFEGEPLPSLGETVTARSAAVSGVLGAVVSVVAMRLNLTSGLLPSLGVPAGLLGFFLARVWIRALDVVGVSHLPFTRQENTLIQIAVVSCSTIAFSGGFGTYILGMSGKSANEGHIGSHGRNVEEPNIGRVIAFLFLVNFSGLFIIVPLRKMMIIRHRLTFPSGTATAHLINSFHTPHGAKQARLQVVTLFKSLGATVLWPIFQWFFAGGKNCGFQIFPTFGMAAYRRGFYFDFSTTNVGIGMICPPMITASMLAGSIVSWGILWPYIETKAGRWFPENLDANDLGGIMGYRVFVGVSMILADGLFTILSALVRTACAMRKRRRGASTVTAAVPPFQCLSATERTMQSFDDRRRAQVFLRDSFPTWVAVASYAALAALSVVAVPLLYPQLGHRHVAAAYVAAPVFAFCNAYGVGVTDMNLSATYGKIAMMVFSSWVGMDGGGVVAGLAACGIIVSAVSGSSDFMQDFKTGYLTLTSPRAMLVGQVAGTALGCVVNPAIFWVFYKVYNMGGGGGDGADVAPYARAYRGIAVLSVGRHGLPDHSVLLCKLFFAMALALSAAREVAERRRWRALRYIPSTIGVAVAFFVPPRIPVGMAVGCLALHVWRRHVDAGGARLLLPAVASGLICGDGLGSLASSMLTLLRARPPICIKFVSRFENQKLDAFLATRHA</sequence>
<reference key="1">
    <citation type="journal article" date="2005" name="Nature">
        <title>The map-based sequence of the rice genome.</title>
        <authorList>
            <consortium name="International rice genome sequencing project (IRGSP)"/>
        </authorList>
    </citation>
    <scope>NUCLEOTIDE SEQUENCE [LARGE SCALE GENOMIC DNA]</scope>
    <source>
        <strain>cv. Nipponbare</strain>
    </source>
</reference>
<reference key="2">
    <citation type="journal article" date="2008" name="Nucleic Acids Res.">
        <title>The rice annotation project database (RAP-DB): 2008 update.</title>
        <authorList>
            <consortium name="The rice annotation project (RAP)"/>
        </authorList>
    </citation>
    <scope>GENOME REANNOTATION</scope>
    <source>
        <strain>cv. Nipponbare</strain>
    </source>
</reference>
<reference key="3">
    <citation type="journal article" date="2013" name="Rice">
        <title>Improvement of the Oryza sativa Nipponbare reference genome using next generation sequence and optical map data.</title>
        <authorList>
            <person name="Kawahara Y."/>
            <person name="de la Bastide M."/>
            <person name="Hamilton J.P."/>
            <person name="Kanamori H."/>
            <person name="McCombie W.R."/>
            <person name="Ouyang S."/>
            <person name="Schwartz D.C."/>
            <person name="Tanaka T."/>
            <person name="Wu J."/>
            <person name="Zhou S."/>
            <person name="Childs K.L."/>
            <person name="Davidson R.M."/>
            <person name="Lin H."/>
            <person name="Quesada-Ocampo L."/>
            <person name="Vaillancourt B."/>
            <person name="Sakai H."/>
            <person name="Lee S.S."/>
            <person name="Kim J."/>
            <person name="Numa H."/>
            <person name="Itoh T."/>
            <person name="Buell C.R."/>
            <person name="Matsumoto T."/>
        </authorList>
    </citation>
    <scope>GENOME REANNOTATION</scope>
    <source>
        <strain>cv. Nipponbare</strain>
    </source>
</reference>
<reference key="4">
    <citation type="journal article" date="2004" name="Plant J.">
        <title>OsYSL2 is a rice metal-nicotianamine transporter that is regulated by iron and expressed in the phloem.</title>
        <authorList>
            <person name="Koike S."/>
            <person name="Inoue H."/>
            <person name="Mizuno D."/>
            <person name="Takahashi M."/>
            <person name="Nakanishi H."/>
            <person name="Mori S."/>
            <person name="Nishizawa N.K."/>
        </authorList>
    </citation>
    <scope>NUCLEOTIDE SEQUENCE [MRNA] OF 63-698</scope>
    <scope>GENE FAMILY</scope>
    <scope>NOMENCLATURE</scope>
    <source>
        <strain>cv. Nipponbare</strain>
    </source>
</reference>
<reference key="5">
    <citation type="journal article" date="2009" name="J. Biol. Chem.">
        <title>Rice OsYSL15 is an iron-regulated iron(III)-deoxymugineic acid Transporter expressed in the roots and is essential for iron uptake in early growth of the seedlings.</title>
        <authorList>
            <person name="Inoue H."/>
            <person name="Kobayashi T."/>
            <person name="Nozoye T."/>
            <person name="Takahashi M."/>
            <person name="Kakei Y."/>
            <person name="Suzuki K."/>
            <person name="Nakazono M."/>
            <person name="Nakanishi H."/>
            <person name="Mori S."/>
            <person name="Nishizawa N.K."/>
        </authorList>
    </citation>
    <scope>TISSUE SPECIFICITY</scope>
</reference>